<reference key="1">
    <citation type="journal article" date="2005" name="Proc. Natl. Acad. Sci. U.S.A.">
        <title>Whole genome sequence of Staphylococcus saprophyticus reveals the pathogenesis of uncomplicated urinary tract infection.</title>
        <authorList>
            <person name="Kuroda M."/>
            <person name="Yamashita A."/>
            <person name="Hirakawa H."/>
            <person name="Kumano M."/>
            <person name="Morikawa K."/>
            <person name="Higashide M."/>
            <person name="Maruyama A."/>
            <person name="Inose Y."/>
            <person name="Matoba K."/>
            <person name="Toh H."/>
            <person name="Kuhara S."/>
            <person name="Hattori M."/>
            <person name="Ohta T."/>
        </authorList>
    </citation>
    <scope>NUCLEOTIDE SEQUENCE [LARGE SCALE GENOMIC DNA]</scope>
    <source>
        <strain>ATCC 15305 / DSM 20229 / NCIMB 8711 / NCTC 7292 / S-41</strain>
    </source>
</reference>
<feature type="chain" id="PRO_1000068726" description="UPF0344 protein SSP1805">
    <location>
        <begin position="1"/>
        <end position="129"/>
    </location>
</feature>
<feature type="transmembrane region" description="Helical" evidence="1">
    <location>
        <begin position="1"/>
        <end position="21"/>
    </location>
</feature>
<feature type="transmembrane region" description="Helical" evidence="1">
    <location>
        <begin position="36"/>
        <end position="56"/>
    </location>
</feature>
<feature type="transmembrane region" description="Helical" evidence="1">
    <location>
        <begin position="68"/>
        <end position="88"/>
    </location>
</feature>
<feature type="transmembrane region" description="Helical" evidence="1">
    <location>
        <begin position="100"/>
        <end position="120"/>
    </location>
</feature>
<comment type="subcellular location">
    <subcellularLocation>
        <location evidence="1">Cell membrane</location>
        <topology evidence="1">Multi-pass membrane protein</topology>
    </subcellularLocation>
</comment>
<comment type="similarity">
    <text evidence="1">Belongs to the UPF0344 family.</text>
</comment>
<proteinExistence type="inferred from homology"/>
<sequence>MLHMHIASWVLLIILFFAAYFNFSEKQGASPYFKPIHMLLRLFMLLVLISGFWVWIQSFSSGAAGGHMLLTLKMICGVAVVALMEVTITKRKKGQPSHGLMWTTIVVIILTMIIGIILPMGPITQMFGL</sequence>
<accession>Q49WA9</accession>
<name>Y1805_STAS1</name>
<organism>
    <name type="scientific">Staphylococcus saprophyticus subsp. saprophyticus (strain ATCC 15305 / DSM 20229 / NCIMB 8711 / NCTC 7292 / S-41)</name>
    <dbReference type="NCBI Taxonomy" id="342451"/>
    <lineage>
        <taxon>Bacteria</taxon>
        <taxon>Bacillati</taxon>
        <taxon>Bacillota</taxon>
        <taxon>Bacilli</taxon>
        <taxon>Bacillales</taxon>
        <taxon>Staphylococcaceae</taxon>
        <taxon>Staphylococcus</taxon>
    </lineage>
</organism>
<gene>
    <name type="ordered locus">SSP1805</name>
</gene>
<protein>
    <recommendedName>
        <fullName evidence="1">UPF0344 protein SSP1805</fullName>
    </recommendedName>
</protein>
<dbReference type="EMBL" id="AP008934">
    <property type="protein sequence ID" value="BAE18950.1"/>
    <property type="molecule type" value="Genomic_DNA"/>
</dbReference>
<dbReference type="RefSeq" id="WP_011303500.1">
    <property type="nucleotide sequence ID" value="NZ_MTGA01000039.1"/>
</dbReference>
<dbReference type="DNASU" id="3616460"/>
<dbReference type="KEGG" id="ssp:SSP1805"/>
<dbReference type="eggNOG" id="ENOG5033A1U">
    <property type="taxonomic scope" value="Bacteria"/>
</dbReference>
<dbReference type="HOGENOM" id="CLU_146641_2_0_9"/>
<dbReference type="OrthoDB" id="2365314at2"/>
<dbReference type="Proteomes" id="UP000006371">
    <property type="component" value="Chromosome"/>
</dbReference>
<dbReference type="GO" id="GO:0005886">
    <property type="term" value="C:plasma membrane"/>
    <property type="evidence" value="ECO:0007669"/>
    <property type="project" value="UniProtKB-SubCell"/>
</dbReference>
<dbReference type="HAMAP" id="MF_01536">
    <property type="entry name" value="UPF0344"/>
    <property type="match status" value="1"/>
</dbReference>
<dbReference type="InterPro" id="IPR010899">
    <property type="entry name" value="UPF0344"/>
</dbReference>
<dbReference type="NCBIfam" id="NF010195">
    <property type="entry name" value="PRK13673.1-2"/>
    <property type="match status" value="1"/>
</dbReference>
<dbReference type="NCBIfam" id="NF010199">
    <property type="entry name" value="PRK13673.1-6"/>
    <property type="match status" value="1"/>
</dbReference>
<dbReference type="Pfam" id="PF07457">
    <property type="entry name" value="DUF1516"/>
    <property type="match status" value="1"/>
</dbReference>
<evidence type="ECO:0000255" key="1">
    <source>
        <dbReference type="HAMAP-Rule" id="MF_01536"/>
    </source>
</evidence>
<keyword id="KW-1003">Cell membrane</keyword>
<keyword id="KW-0472">Membrane</keyword>
<keyword id="KW-1185">Reference proteome</keyword>
<keyword id="KW-0812">Transmembrane</keyword>
<keyword id="KW-1133">Transmembrane helix</keyword>